<evidence type="ECO:0000255" key="1">
    <source>
        <dbReference type="HAMAP-Rule" id="MF_00440"/>
    </source>
</evidence>
<accession>Q129K2</accession>
<dbReference type="EMBL" id="CP000316">
    <property type="protein sequence ID" value="ABE44790.1"/>
    <property type="molecule type" value="Genomic_DNA"/>
</dbReference>
<dbReference type="RefSeq" id="WP_011483788.1">
    <property type="nucleotide sequence ID" value="NC_007948.1"/>
</dbReference>
<dbReference type="SMR" id="Q129K2"/>
<dbReference type="STRING" id="296591.Bpro_2875"/>
<dbReference type="KEGG" id="pol:Bpro_2875"/>
<dbReference type="eggNOG" id="COG1327">
    <property type="taxonomic scope" value="Bacteria"/>
</dbReference>
<dbReference type="HOGENOM" id="CLU_108412_0_1_4"/>
<dbReference type="OrthoDB" id="9807461at2"/>
<dbReference type="Proteomes" id="UP000001983">
    <property type="component" value="Chromosome"/>
</dbReference>
<dbReference type="GO" id="GO:0005524">
    <property type="term" value="F:ATP binding"/>
    <property type="evidence" value="ECO:0007669"/>
    <property type="project" value="UniProtKB-KW"/>
</dbReference>
<dbReference type="GO" id="GO:0003677">
    <property type="term" value="F:DNA binding"/>
    <property type="evidence" value="ECO:0007669"/>
    <property type="project" value="UniProtKB-KW"/>
</dbReference>
<dbReference type="GO" id="GO:0008270">
    <property type="term" value="F:zinc ion binding"/>
    <property type="evidence" value="ECO:0007669"/>
    <property type="project" value="UniProtKB-UniRule"/>
</dbReference>
<dbReference type="GO" id="GO:0045892">
    <property type="term" value="P:negative regulation of DNA-templated transcription"/>
    <property type="evidence" value="ECO:0007669"/>
    <property type="project" value="UniProtKB-UniRule"/>
</dbReference>
<dbReference type="HAMAP" id="MF_00440">
    <property type="entry name" value="NrdR"/>
    <property type="match status" value="1"/>
</dbReference>
<dbReference type="InterPro" id="IPR005144">
    <property type="entry name" value="ATP-cone_dom"/>
</dbReference>
<dbReference type="InterPro" id="IPR055173">
    <property type="entry name" value="NrdR-like_N"/>
</dbReference>
<dbReference type="InterPro" id="IPR003796">
    <property type="entry name" value="RNR_NrdR-like"/>
</dbReference>
<dbReference type="NCBIfam" id="TIGR00244">
    <property type="entry name" value="transcriptional regulator NrdR"/>
    <property type="match status" value="1"/>
</dbReference>
<dbReference type="PANTHER" id="PTHR30455">
    <property type="entry name" value="TRANSCRIPTIONAL REPRESSOR NRDR"/>
    <property type="match status" value="1"/>
</dbReference>
<dbReference type="PANTHER" id="PTHR30455:SF2">
    <property type="entry name" value="TRANSCRIPTIONAL REPRESSOR NRDR"/>
    <property type="match status" value="1"/>
</dbReference>
<dbReference type="Pfam" id="PF03477">
    <property type="entry name" value="ATP-cone"/>
    <property type="match status" value="1"/>
</dbReference>
<dbReference type="Pfam" id="PF22811">
    <property type="entry name" value="Zn_ribbon_NrdR"/>
    <property type="match status" value="1"/>
</dbReference>
<dbReference type="PROSITE" id="PS51161">
    <property type="entry name" value="ATP_CONE"/>
    <property type="match status" value="1"/>
</dbReference>
<gene>
    <name evidence="1" type="primary">nrdR</name>
    <name type="ordered locus">Bpro_2875</name>
</gene>
<protein>
    <recommendedName>
        <fullName evidence="1">Transcriptional repressor NrdR</fullName>
    </recommendedName>
</protein>
<sequence>MKCPFCGNLETQVVETRVSEDADFIRRRRQCGACEKRFTTYERPDVNFPAIVKKDGRRIEYKRGKILGSMNLALRKRPVSTEQIDSAIERIEEKLLSLGVREVPSNRLGELVMRELKKLDKVAYVRFASVYRSFEDIDEFKTLVDEVRR</sequence>
<comment type="function">
    <text evidence="1">Negatively regulates transcription of bacterial ribonucleotide reductase nrd genes and operons by binding to NrdR-boxes.</text>
</comment>
<comment type="cofactor">
    <cofactor evidence="1">
        <name>Zn(2+)</name>
        <dbReference type="ChEBI" id="CHEBI:29105"/>
    </cofactor>
    <text evidence="1">Binds 1 zinc ion.</text>
</comment>
<comment type="similarity">
    <text evidence="1">Belongs to the NrdR family.</text>
</comment>
<keyword id="KW-0067">ATP-binding</keyword>
<keyword id="KW-0238">DNA-binding</keyword>
<keyword id="KW-0479">Metal-binding</keyword>
<keyword id="KW-0547">Nucleotide-binding</keyword>
<keyword id="KW-1185">Reference proteome</keyword>
<keyword id="KW-0678">Repressor</keyword>
<keyword id="KW-0804">Transcription</keyword>
<keyword id="KW-0805">Transcription regulation</keyword>
<keyword id="KW-0862">Zinc</keyword>
<keyword id="KW-0863">Zinc-finger</keyword>
<organism>
    <name type="scientific">Polaromonas sp. (strain JS666 / ATCC BAA-500)</name>
    <dbReference type="NCBI Taxonomy" id="296591"/>
    <lineage>
        <taxon>Bacteria</taxon>
        <taxon>Pseudomonadati</taxon>
        <taxon>Pseudomonadota</taxon>
        <taxon>Betaproteobacteria</taxon>
        <taxon>Burkholderiales</taxon>
        <taxon>Comamonadaceae</taxon>
        <taxon>Polaromonas</taxon>
    </lineage>
</organism>
<name>NRDR_POLSJ</name>
<reference key="1">
    <citation type="journal article" date="2008" name="Appl. Environ. Microbiol.">
        <title>The genome of Polaromonas sp. strain JS666: insights into the evolution of a hydrocarbon- and xenobiotic-degrading bacterium, and features of relevance to biotechnology.</title>
        <authorList>
            <person name="Mattes T.E."/>
            <person name="Alexander A.K."/>
            <person name="Richardson P.M."/>
            <person name="Munk A.C."/>
            <person name="Han C.S."/>
            <person name="Stothard P."/>
            <person name="Coleman N.V."/>
        </authorList>
    </citation>
    <scope>NUCLEOTIDE SEQUENCE [LARGE SCALE GENOMIC DNA]</scope>
    <source>
        <strain>JS666 / ATCC BAA-500</strain>
    </source>
</reference>
<feature type="chain" id="PRO_0000264194" description="Transcriptional repressor NrdR">
    <location>
        <begin position="1"/>
        <end position="149"/>
    </location>
</feature>
<feature type="domain" description="ATP-cone" evidence="1">
    <location>
        <begin position="49"/>
        <end position="139"/>
    </location>
</feature>
<feature type="zinc finger region" evidence="1">
    <location>
        <begin position="3"/>
        <end position="34"/>
    </location>
</feature>
<proteinExistence type="inferred from homology"/>